<comment type="function">
    <text evidence="1">Catalyzes the conversion of 4-hydroxy-tetrahydrodipicolinate (HTPA) to tetrahydrodipicolinate.</text>
</comment>
<comment type="catalytic activity">
    <reaction evidence="1">
        <text>(S)-2,3,4,5-tetrahydrodipicolinate + NAD(+) + H2O = (2S,4S)-4-hydroxy-2,3,4,5-tetrahydrodipicolinate + NADH + H(+)</text>
        <dbReference type="Rhea" id="RHEA:35323"/>
        <dbReference type="ChEBI" id="CHEBI:15377"/>
        <dbReference type="ChEBI" id="CHEBI:15378"/>
        <dbReference type="ChEBI" id="CHEBI:16845"/>
        <dbReference type="ChEBI" id="CHEBI:57540"/>
        <dbReference type="ChEBI" id="CHEBI:57945"/>
        <dbReference type="ChEBI" id="CHEBI:67139"/>
        <dbReference type="EC" id="1.17.1.8"/>
    </reaction>
</comment>
<comment type="catalytic activity">
    <reaction evidence="1">
        <text>(S)-2,3,4,5-tetrahydrodipicolinate + NADP(+) + H2O = (2S,4S)-4-hydroxy-2,3,4,5-tetrahydrodipicolinate + NADPH + H(+)</text>
        <dbReference type="Rhea" id="RHEA:35331"/>
        <dbReference type="ChEBI" id="CHEBI:15377"/>
        <dbReference type="ChEBI" id="CHEBI:15378"/>
        <dbReference type="ChEBI" id="CHEBI:16845"/>
        <dbReference type="ChEBI" id="CHEBI:57783"/>
        <dbReference type="ChEBI" id="CHEBI:58349"/>
        <dbReference type="ChEBI" id="CHEBI:67139"/>
        <dbReference type="EC" id="1.17.1.8"/>
    </reaction>
</comment>
<comment type="pathway">
    <text evidence="1">Amino-acid biosynthesis; L-lysine biosynthesis via DAP pathway; (S)-tetrahydrodipicolinate from L-aspartate: step 4/4.</text>
</comment>
<comment type="subcellular location">
    <subcellularLocation>
        <location evidence="1">Cytoplasm</location>
    </subcellularLocation>
</comment>
<comment type="similarity">
    <text evidence="1">Belongs to the DapB family.</text>
</comment>
<comment type="caution">
    <text evidence="2">Was originally thought to be a dihydrodipicolinate reductase (DHDPR), catalyzing the conversion of dihydrodipicolinate to tetrahydrodipicolinate. However, it was shown in E.coli that the substrate of the enzymatic reaction is not dihydrodipicolinate (DHDP) but in fact (2S,4S)-4-hydroxy-2,3,4,5-tetrahydrodipicolinic acid (HTPA), the product released by the DapA-catalyzed reaction.</text>
</comment>
<evidence type="ECO:0000255" key="1">
    <source>
        <dbReference type="HAMAP-Rule" id="MF_00102"/>
    </source>
</evidence>
<evidence type="ECO:0000305" key="2"/>
<organism>
    <name type="scientific">Carboxydothermus hydrogenoformans (strain ATCC BAA-161 / DSM 6008 / Z-2901)</name>
    <dbReference type="NCBI Taxonomy" id="246194"/>
    <lineage>
        <taxon>Bacteria</taxon>
        <taxon>Bacillati</taxon>
        <taxon>Bacillota</taxon>
        <taxon>Clostridia</taxon>
        <taxon>Thermoanaerobacterales</taxon>
        <taxon>Thermoanaerobacteraceae</taxon>
        <taxon>Carboxydothermus</taxon>
    </lineage>
</organism>
<name>DAPB_CARHZ</name>
<feature type="chain" id="PRO_0000228336" description="4-hydroxy-tetrahydrodipicolinate reductase">
    <location>
        <begin position="1"/>
        <end position="263"/>
    </location>
</feature>
<feature type="active site" description="Proton donor/acceptor" evidence="1">
    <location>
        <position position="153"/>
    </location>
</feature>
<feature type="active site" description="Proton donor" evidence="1">
    <location>
        <position position="157"/>
    </location>
</feature>
<feature type="binding site" evidence="1">
    <location>
        <begin position="8"/>
        <end position="13"/>
    </location>
    <ligand>
        <name>NAD(+)</name>
        <dbReference type="ChEBI" id="CHEBI:57540"/>
    </ligand>
</feature>
<feature type="binding site" evidence="1">
    <location>
        <position position="34"/>
    </location>
    <ligand>
        <name>NAD(+)</name>
        <dbReference type="ChEBI" id="CHEBI:57540"/>
    </ligand>
</feature>
<feature type="binding site" evidence="1">
    <location>
        <begin position="97"/>
        <end position="99"/>
    </location>
    <ligand>
        <name>NAD(+)</name>
        <dbReference type="ChEBI" id="CHEBI:57540"/>
    </ligand>
</feature>
<feature type="binding site" evidence="1">
    <location>
        <begin position="123"/>
        <end position="126"/>
    </location>
    <ligand>
        <name>NAD(+)</name>
        <dbReference type="ChEBI" id="CHEBI:57540"/>
    </ligand>
</feature>
<feature type="binding site" evidence="1">
    <location>
        <position position="154"/>
    </location>
    <ligand>
        <name>(S)-2,3,4,5-tetrahydrodipicolinate</name>
        <dbReference type="ChEBI" id="CHEBI:16845"/>
    </ligand>
</feature>
<feature type="binding site" evidence="1">
    <location>
        <begin position="163"/>
        <end position="164"/>
    </location>
    <ligand>
        <name>(S)-2,3,4,5-tetrahydrodipicolinate</name>
        <dbReference type="ChEBI" id="CHEBI:16845"/>
    </ligand>
</feature>
<gene>
    <name evidence="1" type="primary">dapB</name>
    <name type="ordered locus">CHY_1151</name>
</gene>
<keyword id="KW-0028">Amino-acid biosynthesis</keyword>
<keyword id="KW-0963">Cytoplasm</keyword>
<keyword id="KW-0220">Diaminopimelate biosynthesis</keyword>
<keyword id="KW-0457">Lysine biosynthesis</keyword>
<keyword id="KW-0520">NAD</keyword>
<keyword id="KW-0521">NADP</keyword>
<keyword id="KW-0560">Oxidoreductase</keyword>
<keyword id="KW-1185">Reference proteome</keyword>
<proteinExistence type="inferred from homology"/>
<reference key="1">
    <citation type="journal article" date="2005" name="PLoS Genet.">
        <title>Life in hot carbon monoxide: the complete genome sequence of Carboxydothermus hydrogenoformans Z-2901.</title>
        <authorList>
            <person name="Wu M."/>
            <person name="Ren Q."/>
            <person name="Durkin A.S."/>
            <person name="Daugherty S.C."/>
            <person name="Brinkac L.M."/>
            <person name="Dodson R.J."/>
            <person name="Madupu R."/>
            <person name="Sullivan S.A."/>
            <person name="Kolonay J.F."/>
            <person name="Nelson W.C."/>
            <person name="Tallon L.J."/>
            <person name="Jones K.M."/>
            <person name="Ulrich L.E."/>
            <person name="Gonzalez J.M."/>
            <person name="Zhulin I.B."/>
            <person name="Robb F.T."/>
            <person name="Eisen J.A."/>
        </authorList>
    </citation>
    <scope>NUCLEOTIDE SEQUENCE [LARGE SCALE GENOMIC DNA]</scope>
    <source>
        <strain>ATCC BAA-161 / DSM 6008 / Z-2901</strain>
    </source>
</reference>
<protein>
    <recommendedName>
        <fullName evidence="1">4-hydroxy-tetrahydrodipicolinate reductase</fullName>
        <shortName evidence="1">HTPA reductase</shortName>
        <ecNumber evidence="1">1.17.1.8</ecNumber>
    </recommendedName>
</protein>
<dbReference type="EC" id="1.17.1.8" evidence="1"/>
<dbReference type="EMBL" id="CP000141">
    <property type="protein sequence ID" value="ABB15299.1"/>
    <property type="molecule type" value="Genomic_DNA"/>
</dbReference>
<dbReference type="RefSeq" id="WP_011344072.1">
    <property type="nucleotide sequence ID" value="NC_007503.1"/>
</dbReference>
<dbReference type="SMR" id="Q3ACY8"/>
<dbReference type="FunCoup" id="Q3ACY8">
    <property type="interactions" value="486"/>
</dbReference>
<dbReference type="STRING" id="246194.CHY_1151"/>
<dbReference type="KEGG" id="chy:CHY_1151"/>
<dbReference type="eggNOG" id="COG0289">
    <property type="taxonomic scope" value="Bacteria"/>
</dbReference>
<dbReference type="HOGENOM" id="CLU_047479_0_1_9"/>
<dbReference type="InParanoid" id="Q3ACY8"/>
<dbReference type="OrthoDB" id="9790352at2"/>
<dbReference type="UniPathway" id="UPA00034">
    <property type="reaction ID" value="UER00018"/>
</dbReference>
<dbReference type="Proteomes" id="UP000002706">
    <property type="component" value="Chromosome"/>
</dbReference>
<dbReference type="GO" id="GO:0005829">
    <property type="term" value="C:cytosol"/>
    <property type="evidence" value="ECO:0007669"/>
    <property type="project" value="TreeGrafter"/>
</dbReference>
<dbReference type="GO" id="GO:0008839">
    <property type="term" value="F:4-hydroxy-tetrahydrodipicolinate reductase"/>
    <property type="evidence" value="ECO:0007669"/>
    <property type="project" value="UniProtKB-EC"/>
</dbReference>
<dbReference type="GO" id="GO:0051287">
    <property type="term" value="F:NAD binding"/>
    <property type="evidence" value="ECO:0007669"/>
    <property type="project" value="UniProtKB-UniRule"/>
</dbReference>
<dbReference type="GO" id="GO:0050661">
    <property type="term" value="F:NADP binding"/>
    <property type="evidence" value="ECO:0007669"/>
    <property type="project" value="UniProtKB-UniRule"/>
</dbReference>
<dbReference type="GO" id="GO:0016726">
    <property type="term" value="F:oxidoreductase activity, acting on CH or CH2 groups, NAD or NADP as acceptor"/>
    <property type="evidence" value="ECO:0007669"/>
    <property type="project" value="UniProtKB-UniRule"/>
</dbReference>
<dbReference type="GO" id="GO:0019877">
    <property type="term" value="P:diaminopimelate biosynthetic process"/>
    <property type="evidence" value="ECO:0007669"/>
    <property type="project" value="UniProtKB-UniRule"/>
</dbReference>
<dbReference type="GO" id="GO:0009089">
    <property type="term" value="P:lysine biosynthetic process via diaminopimelate"/>
    <property type="evidence" value="ECO:0007669"/>
    <property type="project" value="UniProtKB-UniRule"/>
</dbReference>
<dbReference type="CDD" id="cd02274">
    <property type="entry name" value="DHDPR_N"/>
    <property type="match status" value="1"/>
</dbReference>
<dbReference type="FunFam" id="3.30.360.10:FF:000009">
    <property type="entry name" value="4-hydroxy-tetrahydrodipicolinate reductase"/>
    <property type="match status" value="1"/>
</dbReference>
<dbReference type="Gene3D" id="3.30.360.10">
    <property type="entry name" value="Dihydrodipicolinate Reductase, domain 2"/>
    <property type="match status" value="1"/>
</dbReference>
<dbReference type="Gene3D" id="3.40.50.720">
    <property type="entry name" value="NAD(P)-binding Rossmann-like Domain"/>
    <property type="match status" value="1"/>
</dbReference>
<dbReference type="HAMAP" id="MF_00102">
    <property type="entry name" value="DapB"/>
    <property type="match status" value="1"/>
</dbReference>
<dbReference type="InterPro" id="IPR022663">
    <property type="entry name" value="DapB_C"/>
</dbReference>
<dbReference type="InterPro" id="IPR000846">
    <property type="entry name" value="DapB_N"/>
</dbReference>
<dbReference type="InterPro" id="IPR022664">
    <property type="entry name" value="DapB_N_CS"/>
</dbReference>
<dbReference type="InterPro" id="IPR023940">
    <property type="entry name" value="DHDPR_bac"/>
</dbReference>
<dbReference type="InterPro" id="IPR036291">
    <property type="entry name" value="NAD(P)-bd_dom_sf"/>
</dbReference>
<dbReference type="NCBIfam" id="TIGR00036">
    <property type="entry name" value="dapB"/>
    <property type="match status" value="1"/>
</dbReference>
<dbReference type="PANTHER" id="PTHR20836:SF0">
    <property type="entry name" value="4-HYDROXY-TETRAHYDRODIPICOLINATE REDUCTASE 1, CHLOROPLASTIC-RELATED"/>
    <property type="match status" value="1"/>
</dbReference>
<dbReference type="PANTHER" id="PTHR20836">
    <property type="entry name" value="DIHYDRODIPICOLINATE REDUCTASE"/>
    <property type="match status" value="1"/>
</dbReference>
<dbReference type="Pfam" id="PF05173">
    <property type="entry name" value="DapB_C"/>
    <property type="match status" value="1"/>
</dbReference>
<dbReference type="Pfam" id="PF01113">
    <property type="entry name" value="DapB_N"/>
    <property type="match status" value="1"/>
</dbReference>
<dbReference type="PIRSF" id="PIRSF000161">
    <property type="entry name" value="DHPR"/>
    <property type="match status" value="1"/>
</dbReference>
<dbReference type="SUPFAM" id="SSF55347">
    <property type="entry name" value="Glyceraldehyde-3-phosphate dehydrogenase-like, C-terminal domain"/>
    <property type="match status" value="1"/>
</dbReference>
<dbReference type="SUPFAM" id="SSF51735">
    <property type="entry name" value="NAD(P)-binding Rossmann-fold domains"/>
    <property type="match status" value="1"/>
</dbReference>
<dbReference type="PROSITE" id="PS01298">
    <property type="entry name" value="DAPB"/>
    <property type="match status" value="1"/>
</dbReference>
<accession>Q3ACY8</accession>
<sequence>MARIVMLGACGKMGREISKNLLMHSEHELVGFVDVVNVGQDFGEILGISRLGKTVEDNLKEVILKTNPEIVLDFSRASGAFTNILIALENKVRVVSGTTGFSQEQIKKIEDVSNANNLGCIIAPNFSIGALLLMKLAQMAAKYFSHVEIIEYHHNLKVDAPSGTAIKTAELLSSIRENQPSAIQEEEKIPGSRGGDYRGIKIHSVRLPGLVAHQEVIFGGRGQSLTLRHDVYSRESYLDGILFALKKVLELDRFVFGLDELLF</sequence>